<evidence type="ECO:0000255" key="1">
    <source>
        <dbReference type="HAMAP-Rule" id="MF_03001"/>
    </source>
</evidence>
<evidence type="ECO:0000269" key="2">
    <source>
    </source>
</evidence>
<evidence type="ECO:0000269" key="3">
    <source>
    </source>
</evidence>
<evidence type="ECO:0000269" key="4">
    <source>
    </source>
</evidence>
<evidence type="ECO:0000269" key="5">
    <source>
    </source>
</evidence>
<evidence type="ECO:0000269" key="6">
    <source>
    </source>
</evidence>
<evidence type="ECO:0000269" key="7">
    <source>
    </source>
</evidence>
<evidence type="ECO:0007744" key="8">
    <source>
    </source>
</evidence>
<evidence type="ECO:0007744" key="9">
    <source>
    </source>
</evidence>
<evidence type="ECO:0007829" key="10">
    <source>
        <dbReference type="PDB" id="3NS6"/>
    </source>
</evidence>
<evidence type="ECO:0007829" key="11">
    <source>
        <dbReference type="PDB" id="4U1E"/>
    </source>
</evidence>
<evidence type="ECO:0007829" key="12">
    <source>
        <dbReference type="PDB" id="4U1F"/>
    </source>
</evidence>
<evidence type="ECO:0007829" key="13">
    <source>
        <dbReference type="PDB" id="8CAS"/>
    </source>
</evidence>
<name>EIF3B_YEAST</name>
<comment type="function">
    <text evidence="1 2">RNA-binding component of the eukaryotic translation initiation factor 3 (eIF-3) complex, which is involved in protein synthesis of a specialized repertoire of mRNAs and, together with other initiation factors, stimulates binding of mRNA and methionyl-tRNAi to the 40S ribosome. The eIF-3 complex specifically targets and initiates translation of a subset of mRNAs involved in cell proliferation.</text>
</comment>
<comment type="subunit">
    <text evidence="6 7">The eukaryotic translation initiation factor 3 (eIF-3) core complex is composed of TIF32, PRT1, NIP1, TIF34 and TIF35. A subcomplex of TIF32, NIP1 and PRT1 mediates the interaction with eIF-1, TIF5/eIF-5 and HCR1. The factors eIF-1, eIF-2, eIF-3, TIF5/eIF-5 and methionyl-tRNAi form a multifactor complex (MFC) that may bind to the 40S ribosome.</text>
</comment>
<comment type="interaction">
    <interactant intactId="EBI-8973">
        <id>P06103</id>
    </interactant>
    <interactant intactId="EBI-14263">
        <id>Q05911</id>
        <label>ADE13</label>
    </interactant>
    <organismsDiffer>false</organismsDiffer>
    <experiments>2</experiments>
</comment>
<comment type="interaction">
    <interactant intactId="EBI-8973">
        <id>P06103</id>
    </interactant>
    <interactant intactId="EBI-8965">
        <id>P32497</id>
        <label>NIP1</label>
    </interactant>
    <organismsDiffer>false</organismsDiffer>
    <experiments>13</experiments>
</comment>
<comment type="interaction">
    <interactant intactId="EBI-8973">
        <id>P06103</id>
    </interactant>
    <interactant intactId="EBI-8973">
        <id>P06103</id>
        <label>PRT1</label>
    </interactant>
    <organismsDiffer>false</organismsDiffer>
    <experiments>2</experiments>
</comment>
<comment type="interaction">
    <interactant intactId="EBI-8973">
        <id>P06103</id>
    </interactant>
    <interactant intactId="EBI-8981">
        <id>P38249</id>
        <label>RPG1</label>
    </interactant>
    <organismsDiffer>false</organismsDiffer>
    <experiments>14</experiments>
</comment>
<comment type="interaction">
    <interactant intactId="EBI-8973">
        <id>P06103</id>
    </interactant>
    <interactant intactId="EBI-8951">
        <id>P40217</id>
        <label>TIF34</label>
    </interactant>
    <organismsDiffer>false</organismsDiffer>
    <experiments>18</experiments>
</comment>
<comment type="interaction">
    <interactant intactId="EBI-8973">
        <id>P06103</id>
    </interactant>
    <interactant intactId="EBI-8958">
        <id>Q04067</id>
        <label>TIF35</label>
    </interactant>
    <organismsDiffer>false</organismsDiffer>
    <experiments>15</experiments>
</comment>
<comment type="interaction">
    <interactant intactId="EBI-8973">
        <id>P06103</id>
    </interactant>
    <interactant intactId="EBI-23172">
        <id>P53235</id>
        <label>YGR054W</label>
    </interactant>
    <organismsDiffer>false</organismsDiffer>
    <experiments>3</experiments>
</comment>
<comment type="subcellular location">
    <subcellularLocation>
        <location evidence="1 3">Cytoplasm</location>
    </subcellularLocation>
</comment>
<comment type="miscellaneous">
    <text evidence="4">Present with 47500 molecules/cell in log phase SD medium.</text>
</comment>
<comment type="similarity">
    <text evidence="1">Belongs to the eIF-3 subunit B family.</text>
</comment>
<protein>
    <recommendedName>
        <fullName evidence="1">Eukaryotic translation initiation factor 3 subunit B</fullName>
        <shortName evidence="1">eIF3b</shortName>
    </recommendedName>
    <alternativeName>
        <fullName>Cell cycle regulation and translation initiation protein</fullName>
    </alternativeName>
    <alternativeName>
        <fullName>Eukaryotic translation initiation factor 3 90 kDa subunit</fullName>
        <shortName evidence="1">eIF3 p90</shortName>
    </alternativeName>
    <alternativeName>
        <fullName>Translation initiation factor eIF3 p90 subunit</fullName>
    </alternativeName>
</protein>
<reference key="1">
    <citation type="journal article" date="1987" name="J. Biol. Chem.">
        <title>Molecular characterization of the yeast PRT1 gene in which mutations affect translation initiation and regulation of cell proliferation.</title>
        <authorList>
            <person name="Hanic-Joyce P.J."/>
            <person name="Singer R.A."/>
            <person name="Johnston G.C."/>
        </authorList>
    </citation>
    <scope>NUCLEOTIDE SEQUENCE [GENOMIC DNA]</scope>
</reference>
<reference key="2">
    <citation type="journal article" date="1997" name="Nature">
        <title>The nucleotide sequence of Saccharomyces cerevisiae chromosome XV.</title>
        <authorList>
            <person name="Dujon B."/>
            <person name="Albermann K."/>
            <person name="Aldea M."/>
            <person name="Alexandraki D."/>
            <person name="Ansorge W."/>
            <person name="Arino J."/>
            <person name="Benes V."/>
            <person name="Bohn C."/>
            <person name="Bolotin-Fukuhara M."/>
            <person name="Bordonne R."/>
            <person name="Boyer J."/>
            <person name="Camasses A."/>
            <person name="Casamayor A."/>
            <person name="Casas C."/>
            <person name="Cheret G."/>
            <person name="Cziepluch C."/>
            <person name="Daignan-Fornier B."/>
            <person name="Dang V.-D."/>
            <person name="de Haan M."/>
            <person name="Delius H."/>
            <person name="Durand P."/>
            <person name="Fairhead C."/>
            <person name="Feldmann H."/>
            <person name="Gaillon L."/>
            <person name="Galisson F."/>
            <person name="Gamo F.-J."/>
            <person name="Gancedo C."/>
            <person name="Goffeau A."/>
            <person name="Goulding S.E."/>
            <person name="Grivell L.A."/>
            <person name="Habbig B."/>
            <person name="Hand N.J."/>
            <person name="Hani J."/>
            <person name="Hattenhorst U."/>
            <person name="Hebling U."/>
            <person name="Hernando Y."/>
            <person name="Herrero E."/>
            <person name="Heumann K."/>
            <person name="Hiesel R."/>
            <person name="Hilger F."/>
            <person name="Hofmann B."/>
            <person name="Hollenberg C.P."/>
            <person name="Hughes B."/>
            <person name="Jauniaux J.-C."/>
            <person name="Kalogeropoulos A."/>
            <person name="Katsoulou C."/>
            <person name="Kordes E."/>
            <person name="Lafuente M.J."/>
            <person name="Landt O."/>
            <person name="Louis E.J."/>
            <person name="Maarse A.C."/>
            <person name="Madania A."/>
            <person name="Mannhaupt G."/>
            <person name="Marck C."/>
            <person name="Martin R.P."/>
            <person name="Mewes H.-W."/>
            <person name="Michaux G."/>
            <person name="Paces V."/>
            <person name="Parle-McDermott A.G."/>
            <person name="Pearson B.M."/>
            <person name="Perrin A."/>
            <person name="Pettersson B."/>
            <person name="Poch O."/>
            <person name="Pohl T.M."/>
            <person name="Poirey R."/>
            <person name="Portetelle D."/>
            <person name="Pujol A."/>
            <person name="Purnelle B."/>
            <person name="Ramezani Rad M."/>
            <person name="Rechmann S."/>
            <person name="Schwager C."/>
            <person name="Schweizer M."/>
            <person name="Sor F."/>
            <person name="Sterky F."/>
            <person name="Tarassov I.A."/>
            <person name="Teodoru C."/>
            <person name="Tettelin H."/>
            <person name="Thierry A."/>
            <person name="Tobiasch E."/>
            <person name="Tzermia M."/>
            <person name="Uhlen M."/>
            <person name="Unseld M."/>
            <person name="Valens M."/>
            <person name="Vandenbol M."/>
            <person name="Vetter I."/>
            <person name="Vlcek C."/>
            <person name="Voet M."/>
            <person name="Volckaert G."/>
            <person name="Voss H."/>
            <person name="Wambutt R."/>
            <person name="Wedler H."/>
            <person name="Wiemann S."/>
            <person name="Winsor B."/>
            <person name="Wolfe K.H."/>
            <person name="Zollner A."/>
            <person name="Zumstein E."/>
            <person name="Kleine K."/>
        </authorList>
    </citation>
    <scope>NUCLEOTIDE SEQUENCE [LARGE SCALE GENOMIC DNA]</scope>
    <source>
        <strain>ATCC 204508 / S288c</strain>
    </source>
</reference>
<reference key="3">
    <citation type="journal article" date="2014" name="G3 (Bethesda)">
        <title>The reference genome sequence of Saccharomyces cerevisiae: Then and now.</title>
        <authorList>
            <person name="Engel S.R."/>
            <person name="Dietrich F.S."/>
            <person name="Fisk D.G."/>
            <person name="Binkley G."/>
            <person name="Balakrishnan R."/>
            <person name="Costanzo M.C."/>
            <person name="Dwight S.S."/>
            <person name="Hitz B.C."/>
            <person name="Karra K."/>
            <person name="Nash R.S."/>
            <person name="Weng S."/>
            <person name="Wong E.D."/>
            <person name="Lloyd P."/>
            <person name="Skrzypek M.S."/>
            <person name="Miyasato S.R."/>
            <person name="Simison M."/>
            <person name="Cherry J.M."/>
        </authorList>
    </citation>
    <scope>GENOME REANNOTATION</scope>
    <source>
        <strain>ATCC 204508 / S288c</strain>
    </source>
</reference>
<reference key="4">
    <citation type="journal article" date="1998" name="Mol. Cell. Biol.">
        <title>Identification of a translation initiation factor 3 (eIF3) core complex, conserved in yeast and mammals, that interacts with eIF5.</title>
        <authorList>
            <person name="Phan L."/>
            <person name="Zhang X."/>
            <person name="Asano K."/>
            <person name="Anderson J."/>
            <person name="Vornlocher H.-P."/>
            <person name="Greenberg J.R."/>
            <person name="Qin J."/>
            <person name="Hinnebusch A.G."/>
        </authorList>
    </citation>
    <scope>IDENTIFICATION IN THE EIF-3 CORE COMPLEX</scope>
    <scope>IDENTIFICATION BY MASS SPECTROMETRY</scope>
</reference>
<reference key="5">
    <citation type="journal article" date="2001" name="EMBO J.">
        <title>A subcomplex of three eIF3 subunits binds eIF1 and eIF5 and stimulates ribosome binding of mRNA and tRNA(i)Met.</title>
        <authorList>
            <person name="Phan L."/>
            <person name="Schoenfeld L.W."/>
            <person name="Valasek L."/>
            <person name="Nielsen K.H."/>
            <person name="Hinnebusch A.G."/>
        </authorList>
    </citation>
    <scope>FUNCTION</scope>
</reference>
<reference key="6">
    <citation type="journal article" date="2001" name="J. Biol. Chem.">
        <title>Saccharomyces cerevisiae protein Pci8p and human protein eIF3e/Int-6 interact with the eIF3 core complex by binding to cognate eIF3b subunits.</title>
        <authorList>
            <person name="Shalev A."/>
            <person name="Valasek L."/>
            <person name="Pise-Masison C.A."/>
            <person name="Radonovich M."/>
            <person name="Phan L."/>
            <person name="Clayton J."/>
            <person name="He H."/>
            <person name="Brady J.N."/>
            <person name="Hinnebusch A.G."/>
            <person name="Asano K."/>
        </authorList>
    </citation>
    <scope>INTERACTION WITH PCI8</scope>
</reference>
<reference key="7">
    <citation type="journal article" date="2003" name="Nature">
        <title>Global analysis of protein localization in budding yeast.</title>
        <authorList>
            <person name="Huh W.-K."/>
            <person name="Falvo J.V."/>
            <person name="Gerke L.C."/>
            <person name="Carroll A.S."/>
            <person name="Howson R.W."/>
            <person name="Weissman J.S."/>
            <person name="O'Shea E.K."/>
        </authorList>
    </citation>
    <scope>SUBCELLULAR LOCATION [LARGE SCALE ANALYSIS]</scope>
</reference>
<reference key="8">
    <citation type="journal article" date="2003" name="Nature">
        <title>Global analysis of protein expression in yeast.</title>
        <authorList>
            <person name="Ghaemmaghami S."/>
            <person name="Huh W.-K."/>
            <person name="Bower K."/>
            <person name="Howson R.W."/>
            <person name="Belle A."/>
            <person name="Dephoure N."/>
            <person name="O'Shea E.K."/>
            <person name="Weissman J.S."/>
        </authorList>
    </citation>
    <scope>LEVEL OF PROTEIN EXPRESSION [LARGE SCALE ANALYSIS]</scope>
</reference>
<reference key="9">
    <citation type="journal article" date="2006" name="Mol. Cell. Biol.">
        <title>Interaction of the RNP1 motif in PRT1 with HCR1 promotes 40S binding of eukaryotic initiation factor 3 in yeast.</title>
        <authorList>
            <person name="Nielsen K.H."/>
            <person name="Valasek L."/>
            <person name="Sykes C."/>
            <person name="Jivotovskaya A."/>
            <person name="Hinnebusch A.G."/>
        </authorList>
    </citation>
    <scope>INTERACTION WITH HCR1; NIP1; TIF32; TIF34; TIF35; EIF-1; EIF-2 AND EIF-5</scope>
    <scope>ASSOCIATION WITH THE 40S RIBOSOME</scope>
    <scope>MUTAGENESIS OF 124-LYS--GLU-130</scope>
</reference>
<reference key="10">
    <citation type="journal article" date="2008" name="Mol. Cell. Proteomics">
        <title>A multidimensional chromatography technology for in-depth phosphoproteome analysis.</title>
        <authorList>
            <person name="Albuquerque C.P."/>
            <person name="Smolka M.B."/>
            <person name="Payne S.H."/>
            <person name="Bafna V."/>
            <person name="Eng J."/>
            <person name="Zhou H."/>
        </authorList>
    </citation>
    <scope>PHOSPHORYLATION [LARGE SCALE ANALYSIS] AT SER-61 AND SER-669</scope>
    <scope>IDENTIFICATION BY MASS SPECTROMETRY [LARGE SCALE ANALYSIS]</scope>
</reference>
<reference key="11">
    <citation type="journal article" date="2008" name="Proc. Natl. Acad. Sci. U.S.A.">
        <title>Mass spectrometry reveals modularity and a complete subunit interaction map of the eukaryotic translation factor eIF3.</title>
        <authorList>
            <person name="Zhou M."/>
            <person name="Sandercock A.M."/>
            <person name="Fraser C.S."/>
            <person name="Ridlova G."/>
            <person name="Stephens E."/>
            <person name="Schenauer M.R."/>
            <person name="Yokoi-Fong T."/>
            <person name="Barsky D."/>
            <person name="Leary J.A."/>
            <person name="Hershey J.W.B."/>
            <person name="Doudna J.A."/>
            <person name="Robinson C.V."/>
        </authorList>
    </citation>
    <scope>IDENTIFICATION IN THE EIF-3 COMPLEX WITH NIP1; TIF32; TIF34 AND TIF35</scope>
</reference>
<reference key="12">
    <citation type="journal article" date="2009" name="Science">
        <title>Global analysis of Cdk1 substrate phosphorylation sites provides insights into evolution.</title>
        <authorList>
            <person name="Holt L.J."/>
            <person name="Tuch B.B."/>
            <person name="Villen J."/>
            <person name="Johnson A.D."/>
            <person name="Gygi S.P."/>
            <person name="Morgan D.O."/>
        </authorList>
    </citation>
    <scope>PHOSPHORYLATION [LARGE SCALE ANALYSIS] AT SER-61 AND TYR-67</scope>
    <scope>IDENTIFICATION BY MASS SPECTROMETRY [LARGE SCALE ANALYSIS]</scope>
</reference>
<organism>
    <name type="scientific">Saccharomyces cerevisiae (strain ATCC 204508 / S288c)</name>
    <name type="common">Baker's yeast</name>
    <dbReference type="NCBI Taxonomy" id="559292"/>
    <lineage>
        <taxon>Eukaryota</taxon>
        <taxon>Fungi</taxon>
        <taxon>Dikarya</taxon>
        <taxon>Ascomycota</taxon>
        <taxon>Saccharomycotina</taxon>
        <taxon>Saccharomycetes</taxon>
        <taxon>Saccharomycetales</taxon>
        <taxon>Saccharomycetaceae</taxon>
        <taxon>Saccharomyces</taxon>
    </lineage>
</organism>
<keyword id="KW-0002">3D-structure</keyword>
<keyword id="KW-0963">Cytoplasm</keyword>
<keyword id="KW-0396">Initiation factor</keyword>
<keyword id="KW-0597">Phosphoprotein</keyword>
<keyword id="KW-0648">Protein biosynthesis</keyword>
<keyword id="KW-1185">Reference proteome</keyword>
<keyword id="KW-0677">Repeat</keyword>
<keyword id="KW-0694">RNA-binding</keyword>
<keyword id="KW-0853">WD repeat</keyword>
<dbReference type="EMBL" id="J02674">
    <property type="protein sequence ID" value="AAA34917.1"/>
    <property type="molecule type" value="Genomic_DNA"/>
</dbReference>
<dbReference type="EMBL" id="Z75269">
    <property type="protein sequence ID" value="CAA99690.1"/>
    <property type="molecule type" value="Genomic_DNA"/>
</dbReference>
<dbReference type="EMBL" id="BK006948">
    <property type="protein sequence ID" value="DAA11122.1"/>
    <property type="molecule type" value="Genomic_DNA"/>
</dbReference>
<dbReference type="PIR" id="A29562">
    <property type="entry name" value="A29562"/>
</dbReference>
<dbReference type="RefSeq" id="NP_015006.3">
    <property type="nucleotide sequence ID" value="NM_001183781.3"/>
</dbReference>
<dbReference type="PDB" id="3JAP">
    <property type="method" value="EM"/>
    <property type="resolution" value="4.90 A"/>
    <property type="chains" value="r=704-734"/>
</dbReference>
<dbReference type="PDB" id="3NS5">
    <property type="method" value="X-ray"/>
    <property type="resolution" value="2.60 A"/>
    <property type="chains" value="A/B=76-161"/>
</dbReference>
<dbReference type="PDB" id="3NS6">
    <property type="method" value="X-ray"/>
    <property type="resolution" value="1.25 A"/>
    <property type="chains" value="A/B=76-170"/>
</dbReference>
<dbReference type="PDB" id="3ZWL">
    <property type="method" value="X-ray"/>
    <property type="resolution" value="2.20 A"/>
    <property type="chains" value="E/F=693-739"/>
</dbReference>
<dbReference type="PDB" id="4U1E">
    <property type="method" value="X-ray"/>
    <property type="resolution" value="2.00 A"/>
    <property type="chains" value="B=694-737"/>
</dbReference>
<dbReference type="PDB" id="4U1F">
    <property type="method" value="X-ray"/>
    <property type="resolution" value="2.20 A"/>
    <property type="chains" value="A/B=172-665"/>
</dbReference>
<dbReference type="PDB" id="6FYX">
    <property type="method" value="EM"/>
    <property type="resolution" value="3.05 A"/>
    <property type="chains" value="p=1-763"/>
</dbReference>
<dbReference type="PDB" id="6FYY">
    <property type="method" value="EM"/>
    <property type="resolution" value="3.05 A"/>
    <property type="chains" value="p=1-763"/>
</dbReference>
<dbReference type="PDB" id="6GSM">
    <property type="method" value="EM"/>
    <property type="resolution" value="5.15 A"/>
    <property type="chains" value="p=77-737"/>
</dbReference>
<dbReference type="PDB" id="6GSN">
    <property type="method" value="EM"/>
    <property type="resolution" value="5.75 A"/>
    <property type="chains" value="p=72-737"/>
</dbReference>
<dbReference type="PDB" id="6ZCE">
    <property type="method" value="EM"/>
    <property type="resolution" value="5.30 A"/>
    <property type="chains" value="p=1-763"/>
</dbReference>
<dbReference type="PDB" id="6ZU9">
    <property type="method" value="EM"/>
    <property type="resolution" value="6.20 A"/>
    <property type="chains" value="p=1-763"/>
</dbReference>
<dbReference type="PDB" id="8CAH">
    <property type="method" value="EM"/>
    <property type="resolution" value="3.00 A"/>
    <property type="chains" value="p=1-763"/>
</dbReference>
<dbReference type="PDB" id="8CAS">
    <property type="method" value="EM"/>
    <property type="resolution" value="3.30 A"/>
    <property type="chains" value="p=1-763"/>
</dbReference>
<dbReference type="PDBsum" id="3JAP"/>
<dbReference type="PDBsum" id="3NS5"/>
<dbReference type="PDBsum" id="3NS6"/>
<dbReference type="PDBsum" id="3ZWL"/>
<dbReference type="PDBsum" id="4U1E"/>
<dbReference type="PDBsum" id="4U1F"/>
<dbReference type="PDBsum" id="6FYX"/>
<dbReference type="PDBsum" id="6FYY"/>
<dbReference type="PDBsum" id="6GSM"/>
<dbReference type="PDBsum" id="6GSN"/>
<dbReference type="PDBsum" id="6ZCE"/>
<dbReference type="PDBsum" id="6ZU9"/>
<dbReference type="PDBsum" id="8CAH"/>
<dbReference type="PDBsum" id="8CAS"/>
<dbReference type="EMDB" id="EMD-0057"/>
<dbReference type="EMDB" id="EMD-0058"/>
<dbReference type="EMDB" id="EMD-11160"/>
<dbReference type="EMDB" id="EMD-11439"/>
<dbReference type="EMDB" id="EMD-16525"/>
<dbReference type="EMDB" id="EMD-3048"/>
<dbReference type="EMDB" id="EMD-4327"/>
<dbReference type="EMDB" id="EMD-4328"/>
<dbReference type="SMR" id="P06103"/>
<dbReference type="BioGRID" id="34746">
    <property type="interactions" value="229"/>
</dbReference>
<dbReference type="ComplexPortal" id="CPX-1831">
    <property type="entry name" value="Eukaryotic translation initiation factor 3 core complex"/>
</dbReference>
<dbReference type="DIP" id="DIP-2519N"/>
<dbReference type="FunCoup" id="P06103">
    <property type="interactions" value="1633"/>
</dbReference>
<dbReference type="IntAct" id="P06103">
    <property type="interactions" value="65"/>
</dbReference>
<dbReference type="MINT" id="P06103"/>
<dbReference type="STRING" id="4932.YOR361C"/>
<dbReference type="iPTMnet" id="P06103"/>
<dbReference type="PaxDb" id="4932-YOR361C"/>
<dbReference type="PeptideAtlas" id="P06103"/>
<dbReference type="EnsemblFungi" id="YOR361C_mRNA">
    <property type="protein sequence ID" value="YOR361C"/>
    <property type="gene ID" value="YOR361C"/>
</dbReference>
<dbReference type="GeneID" id="854543"/>
<dbReference type="KEGG" id="sce:YOR361C"/>
<dbReference type="AGR" id="SGD:S000005888"/>
<dbReference type="SGD" id="S000005888">
    <property type="gene designation" value="PRT1"/>
</dbReference>
<dbReference type="VEuPathDB" id="FungiDB:YOR361C"/>
<dbReference type="eggNOG" id="KOG2314">
    <property type="taxonomic scope" value="Eukaryota"/>
</dbReference>
<dbReference type="GeneTree" id="ENSGT00550000074913"/>
<dbReference type="HOGENOM" id="CLU_011152_4_0_1"/>
<dbReference type="InParanoid" id="P06103"/>
<dbReference type="OMA" id="LWGGPQF"/>
<dbReference type="OrthoDB" id="10250414at2759"/>
<dbReference type="BioCyc" id="YEAST:G3O-33831-MONOMER"/>
<dbReference type="Reactome" id="R-SCE-156827">
    <property type="pathway name" value="L13a-mediated translational silencing of Ceruloplasmin expression"/>
</dbReference>
<dbReference type="Reactome" id="R-SCE-72649">
    <property type="pathway name" value="Translation initiation complex formation"/>
</dbReference>
<dbReference type="Reactome" id="R-SCE-72695">
    <property type="pathway name" value="Formation of the ternary complex, and subsequently, the 43S complex"/>
</dbReference>
<dbReference type="Reactome" id="R-SCE-72702">
    <property type="pathway name" value="Ribosomal scanning and start codon recognition"/>
</dbReference>
<dbReference type="BioGRID-ORCS" id="854543">
    <property type="hits" value="9 hits in 10 CRISPR screens"/>
</dbReference>
<dbReference type="EvolutionaryTrace" id="P06103"/>
<dbReference type="PRO" id="PR:P06103"/>
<dbReference type="Proteomes" id="UP000002311">
    <property type="component" value="Chromosome XV"/>
</dbReference>
<dbReference type="RNAct" id="P06103">
    <property type="molecule type" value="protein"/>
</dbReference>
<dbReference type="GO" id="GO:0010494">
    <property type="term" value="C:cytoplasmic stress granule"/>
    <property type="evidence" value="ECO:0000314"/>
    <property type="project" value="SGD"/>
</dbReference>
<dbReference type="GO" id="GO:0016282">
    <property type="term" value="C:eukaryotic 43S preinitiation complex"/>
    <property type="evidence" value="ECO:0007669"/>
    <property type="project" value="UniProtKB-UniRule"/>
</dbReference>
<dbReference type="GO" id="GO:0033290">
    <property type="term" value="C:eukaryotic 48S preinitiation complex"/>
    <property type="evidence" value="ECO:0000314"/>
    <property type="project" value="SGD"/>
</dbReference>
<dbReference type="GO" id="GO:0005852">
    <property type="term" value="C:eukaryotic translation initiation factor 3 complex"/>
    <property type="evidence" value="ECO:0000314"/>
    <property type="project" value="SGD"/>
</dbReference>
<dbReference type="GO" id="GO:0043614">
    <property type="term" value="C:multi-eIF complex"/>
    <property type="evidence" value="ECO:0000314"/>
    <property type="project" value="SGD"/>
</dbReference>
<dbReference type="GO" id="GO:0042802">
    <property type="term" value="F:identical protein binding"/>
    <property type="evidence" value="ECO:0000353"/>
    <property type="project" value="IntAct"/>
</dbReference>
<dbReference type="GO" id="GO:0003723">
    <property type="term" value="F:RNA binding"/>
    <property type="evidence" value="ECO:0007669"/>
    <property type="project" value="UniProtKB-UniRule"/>
</dbReference>
<dbReference type="GO" id="GO:0003743">
    <property type="term" value="F:translation initiation factor activity"/>
    <property type="evidence" value="ECO:0000314"/>
    <property type="project" value="SGD"/>
</dbReference>
<dbReference type="GO" id="GO:0031369">
    <property type="term" value="F:translation initiation factor binding"/>
    <property type="evidence" value="ECO:0007669"/>
    <property type="project" value="InterPro"/>
</dbReference>
<dbReference type="GO" id="GO:0002183">
    <property type="term" value="P:cytoplasmic translational initiation"/>
    <property type="evidence" value="ECO:0000314"/>
    <property type="project" value="SGD"/>
</dbReference>
<dbReference type="GO" id="GO:0001732">
    <property type="term" value="P:formation of cytoplasmic translation initiation complex"/>
    <property type="evidence" value="ECO:0007669"/>
    <property type="project" value="UniProtKB-UniRule"/>
</dbReference>
<dbReference type="GO" id="GO:0006413">
    <property type="term" value="P:translational initiation"/>
    <property type="evidence" value="ECO:0000314"/>
    <property type="project" value="ComplexPortal"/>
</dbReference>
<dbReference type="CDD" id="cd12278">
    <property type="entry name" value="RRM_eIF3B"/>
    <property type="match status" value="1"/>
</dbReference>
<dbReference type="FunFam" id="3.30.70.330:FF:000739">
    <property type="entry name" value="Eukaryotic translation initiation factor 3 subunit B"/>
    <property type="match status" value="1"/>
</dbReference>
<dbReference type="Gene3D" id="3.30.70.330">
    <property type="match status" value="1"/>
</dbReference>
<dbReference type="Gene3D" id="2.130.10.10">
    <property type="entry name" value="YVTN repeat-like/Quinoprotein amine dehydrogenase"/>
    <property type="match status" value="1"/>
</dbReference>
<dbReference type="HAMAP" id="MF_03001">
    <property type="entry name" value="eIF3b"/>
    <property type="match status" value="1"/>
</dbReference>
<dbReference type="InterPro" id="IPR011400">
    <property type="entry name" value="EIF3B"/>
</dbReference>
<dbReference type="InterPro" id="IPR034363">
    <property type="entry name" value="eIF3B_RRM"/>
</dbReference>
<dbReference type="InterPro" id="IPR012677">
    <property type="entry name" value="Nucleotide-bd_a/b_plait_sf"/>
</dbReference>
<dbReference type="InterPro" id="IPR035979">
    <property type="entry name" value="RBD_domain_sf"/>
</dbReference>
<dbReference type="InterPro" id="IPR000504">
    <property type="entry name" value="RRM_dom"/>
</dbReference>
<dbReference type="InterPro" id="IPR013979">
    <property type="entry name" value="TIF_beta_prop-like"/>
</dbReference>
<dbReference type="InterPro" id="IPR015943">
    <property type="entry name" value="WD40/YVTN_repeat-like_dom_sf"/>
</dbReference>
<dbReference type="PANTHER" id="PTHR14068">
    <property type="entry name" value="EUKARYOTIC TRANSLATION INITIATION FACTOR 3 EIF3 -RELATED"/>
    <property type="match status" value="1"/>
</dbReference>
<dbReference type="PANTHER" id="PTHR14068:SF0">
    <property type="entry name" value="EUKARYOTIC TRANSLATION INITIATION FACTOR 3 SUBUNIT B"/>
    <property type="match status" value="1"/>
</dbReference>
<dbReference type="Pfam" id="PF08662">
    <property type="entry name" value="eIF2A"/>
    <property type="match status" value="1"/>
</dbReference>
<dbReference type="Pfam" id="PF00076">
    <property type="entry name" value="RRM_1"/>
    <property type="match status" value="1"/>
</dbReference>
<dbReference type="PIRSF" id="PIRSF036424">
    <property type="entry name" value="eIF3b"/>
    <property type="match status" value="1"/>
</dbReference>
<dbReference type="SMART" id="SM00360">
    <property type="entry name" value="RRM"/>
    <property type="match status" value="1"/>
</dbReference>
<dbReference type="SUPFAM" id="SSF82171">
    <property type="entry name" value="DPP6 N-terminal domain-like"/>
    <property type="match status" value="1"/>
</dbReference>
<dbReference type="SUPFAM" id="SSF54928">
    <property type="entry name" value="RNA-binding domain, RBD"/>
    <property type="match status" value="1"/>
</dbReference>
<dbReference type="PROSITE" id="PS50102">
    <property type="entry name" value="RRM"/>
    <property type="match status" value="1"/>
</dbReference>
<sequence length="763" mass="88130">MKNFLPRTLKNIYELYFNNISVHSIVSRNTQLKRSKIIQMTTETFEDIKLEDIPVDDIDFSDLEEQYKVTEEFNFDQYIVVNGAPVIPSAKVPVLKKALTSLFSKAGKVVNMEFPIDEATGKTKGFLFVECGSMNDAKKIIKSFHGKRLDLKHRLFLYTMKDVERYNSDDFDTEFREPDMPTFVPSSSLKSWLMDDKVRDQFVLQDDVKTSVFWNSMFNEEDSLVESRENWSTNYVRFSPKGTYLFSYHQQGVTAWGGPNFDRLRRFYHPDVRNSSVSPNEKYLVTFSTEPIIVEEDNEFSPFTKKNEGHQLCIWDIASGLLMATFPVIKSPYLKWPLVRWSYNDKYCARMVGDSLIVHDATKNFMPLEAKALKPSGIRDFSFAPEGVKLQPFRNGDEPSVLLAYWTPETNNSACTATIAEVPRGRVLKTVNLVQVSNVTLHWQNQAEFLCFNVERHTKSGKTQFSNLQICRLTERDIPVEKVELKDSVFEFGWEPHGNRFVTISVHEVADMNYAIPANTIRFYAPETKEKTDVIKRWSLVKEIPKTFANTVSWSPAGRFVVVGALVGPNMRRSDLQFYDMDYPGEKNINDNNDVSASLKDVAHPTYSAATNITWDPSGRYVTAWSSSLKHKVEHGYKIFNIAGNLVKEDIIAGFKNFAWRPRPASILSNAERKKVRKNLREWSAQFEEQDAMEADTAMRDLILHQRELLKQWTEYREKIGQEMEKSMNFKIFDVQPEDASDDFTTIEEIVEEVLEETKEKVE</sequence>
<feature type="chain" id="PRO_0000123535" description="Eukaryotic translation initiation factor 3 subunit B">
    <location>
        <begin position="1"/>
        <end position="763"/>
    </location>
</feature>
<feature type="domain" description="RRM" evidence="1">
    <location>
        <begin position="77"/>
        <end position="162"/>
    </location>
</feature>
<feature type="repeat" description="WD 1">
    <location>
        <begin position="228"/>
        <end position="266"/>
    </location>
</feature>
<feature type="repeat" description="WD 2">
    <location>
        <begin position="277"/>
        <end position="325"/>
    </location>
</feature>
<feature type="repeat" description="WD 3">
    <location>
        <begin position="373"/>
        <end position="416"/>
    </location>
</feature>
<feature type="repeat" description="WD 4">
    <location>
        <begin position="484"/>
        <end position="524"/>
    </location>
</feature>
<feature type="repeat" description="WD 5">
    <location>
        <begin position="544"/>
        <end position="589"/>
    </location>
</feature>
<feature type="repeat" description="WD 6">
    <location>
        <begin position="605"/>
        <end position="650"/>
    </location>
</feature>
<feature type="region of interest" description="Sufficient for interaction with HCR1 and TIF32" evidence="5">
    <location>
        <begin position="1"/>
        <end position="136"/>
    </location>
</feature>
<feature type="region of interest" description="Sufficient for interaction with PIC8">
    <location>
        <begin position="28"/>
        <end position="261"/>
    </location>
</feature>
<feature type="modified residue" description="Phosphoserine" evidence="8 9">
    <location>
        <position position="61"/>
    </location>
</feature>
<feature type="modified residue" description="Phosphotyrosine" evidence="9">
    <location>
        <position position="67"/>
    </location>
</feature>
<feature type="modified residue" description="Phosphoserine" evidence="8">
    <location>
        <position position="669"/>
    </location>
</feature>
<feature type="mutagenesis site" description="Impairs interaction with HCR1 and TIF32, impairs interaction of the eIF-3 complex with eIF-1, eIF-2 and the 40S ribosome, and impairs initiation of translation." evidence="5">
    <original>KGFLFVE</original>
    <variation>AAAAAAA</variation>
    <location>
        <begin position="124"/>
        <end position="130"/>
    </location>
</feature>
<feature type="strand" evidence="10">
    <location>
        <begin position="78"/>
        <end position="83"/>
    </location>
</feature>
<feature type="helix" evidence="10">
    <location>
        <begin position="89"/>
        <end position="91"/>
    </location>
</feature>
<feature type="helix" evidence="10">
    <location>
        <begin position="92"/>
        <end position="104"/>
    </location>
</feature>
<feature type="strand" evidence="10">
    <location>
        <begin position="109"/>
        <end position="113"/>
    </location>
</feature>
<feature type="turn" evidence="10">
    <location>
        <begin position="118"/>
        <end position="121"/>
    </location>
</feature>
<feature type="strand" evidence="10">
    <location>
        <begin position="125"/>
        <end position="133"/>
    </location>
</feature>
<feature type="helix" evidence="10">
    <location>
        <begin position="134"/>
        <end position="144"/>
    </location>
</feature>
<feature type="strand" evidence="10">
    <location>
        <begin position="148"/>
        <end position="152"/>
    </location>
</feature>
<feature type="strand" evidence="10">
    <location>
        <begin position="156"/>
        <end position="160"/>
    </location>
</feature>
<feature type="helix" evidence="10">
    <location>
        <begin position="161"/>
        <end position="168"/>
    </location>
</feature>
<feature type="helix" evidence="12">
    <location>
        <begin position="186"/>
        <end position="189"/>
    </location>
</feature>
<feature type="helix" evidence="12">
    <location>
        <begin position="191"/>
        <end position="194"/>
    </location>
</feature>
<feature type="strand" evidence="12">
    <location>
        <begin position="201"/>
        <end position="205"/>
    </location>
</feature>
<feature type="strand" evidence="12">
    <location>
        <begin position="207"/>
        <end position="214"/>
    </location>
</feature>
<feature type="strand" evidence="12">
    <location>
        <begin position="224"/>
        <end position="234"/>
    </location>
</feature>
<feature type="strand" evidence="12">
    <location>
        <begin position="236"/>
        <end position="238"/>
    </location>
</feature>
<feature type="strand" evidence="13">
    <location>
        <begin position="240"/>
        <end position="242"/>
    </location>
</feature>
<feature type="strand" evidence="12">
    <location>
        <begin position="245"/>
        <end position="248"/>
    </location>
</feature>
<feature type="strand" evidence="12">
    <location>
        <begin position="250"/>
        <end position="257"/>
    </location>
</feature>
<feature type="turn" evidence="12">
    <location>
        <begin position="258"/>
        <end position="261"/>
    </location>
</feature>
<feature type="strand" evidence="12">
    <location>
        <begin position="262"/>
        <end position="268"/>
    </location>
</feature>
<feature type="strand" evidence="12">
    <location>
        <begin position="272"/>
        <end position="277"/>
    </location>
</feature>
<feature type="strand" evidence="12">
    <location>
        <begin position="283"/>
        <end position="290"/>
    </location>
</feature>
<feature type="helix" evidence="12">
    <location>
        <begin position="305"/>
        <end position="307"/>
    </location>
</feature>
<feature type="strand" evidence="12">
    <location>
        <begin position="312"/>
        <end position="316"/>
    </location>
</feature>
<feature type="turn" evidence="12">
    <location>
        <begin position="317"/>
        <end position="319"/>
    </location>
</feature>
<feature type="strand" evidence="12">
    <location>
        <begin position="322"/>
        <end position="326"/>
    </location>
</feature>
<feature type="strand" evidence="12">
    <location>
        <begin position="338"/>
        <end position="341"/>
    </location>
</feature>
<feature type="strand" evidence="12">
    <location>
        <begin position="345"/>
        <end position="352"/>
    </location>
</feature>
<feature type="strand" evidence="12">
    <location>
        <begin position="355"/>
        <end position="360"/>
    </location>
</feature>
<feature type="helix" evidence="12">
    <location>
        <begin position="361"/>
        <end position="363"/>
    </location>
</feature>
<feature type="strand" evidence="13">
    <location>
        <begin position="364"/>
        <end position="367"/>
    </location>
</feature>
<feature type="helix" evidence="12">
    <location>
        <begin position="371"/>
        <end position="373"/>
    </location>
</feature>
<feature type="strand" evidence="12">
    <location>
        <begin position="380"/>
        <end position="383"/>
    </location>
</feature>
<feature type="strand" evidence="12">
    <location>
        <begin position="395"/>
        <end position="397"/>
    </location>
</feature>
<feature type="strand" evidence="12">
    <location>
        <begin position="400"/>
        <end position="407"/>
    </location>
</feature>
<feature type="strand" evidence="12">
    <location>
        <begin position="411"/>
        <end position="413"/>
    </location>
</feature>
<feature type="strand" evidence="12">
    <location>
        <begin position="416"/>
        <end position="422"/>
    </location>
</feature>
<feature type="strand" evidence="12">
    <location>
        <begin position="427"/>
        <end position="432"/>
    </location>
</feature>
<feature type="strand" evidence="12">
    <location>
        <begin position="435"/>
        <end position="443"/>
    </location>
</feature>
<feature type="strand" evidence="12">
    <location>
        <begin position="447"/>
        <end position="457"/>
    </location>
</feature>
<feature type="strand" evidence="13">
    <location>
        <begin position="459"/>
        <end position="463"/>
    </location>
</feature>
<feature type="strand" evidence="12">
    <location>
        <begin position="464"/>
        <end position="472"/>
    </location>
</feature>
<feature type="strand" evidence="12">
    <location>
        <begin position="480"/>
        <end position="484"/>
    </location>
</feature>
<feature type="strand" evidence="12">
    <location>
        <begin position="486"/>
        <end position="494"/>
    </location>
</feature>
<feature type="strand" evidence="12">
    <location>
        <begin position="501"/>
        <end position="506"/>
    </location>
</feature>
<feature type="strand" evidence="13">
    <location>
        <begin position="514"/>
        <end position="516"/>
    </location>
</feature>
<feature type="strand" evidence="12">
    <location>
        <begin position="519"/>
        <end position="527"/>
    </location>
</feature>
<feature type="turn" evidence="13">
    <location>
        <begin position="529"/>
        <end position="531"/>
    </location>
</feature>
<feature type="strand" evidence="12">
    <location>
        <begin position="538"/>
        <end position="547"/>
    </location>
</feature>
<feature type="strand" evidence="12">
    <location>
        <begin position="551"/>
        <end position="554"/>
    </location>
</feature>
<feature type="strand" evidence="12">
    <location>
        <begin position="558"/>
        <end position="565"/>
    </location>
</feature>
<feature type="strand" evidence="13">
    <location>
        <begin position="568"/>
        <end position="570"/>
    </location>
</feature>
<feature type="strand" evidence="12">
    <location>
        <begin position="571"/>
        <end position="573"/>
    </location>
</feature>
<feature type="strand" evidence="12">
    <location>
        <begin position="575"/>
        <end position="580"/>
    </location>
</feature>
<feature type="strand" evidence="12">
    <location>
        <begin position="593"/>
        <end position="596"/>
    </location>
</feature>
<feature type="strand" evidence="12">
    <location>
        <begin position="600"/>
        <end position="603"/>
    </location>
</feature>
<feature type="strand" evidence="12">
    <location>
        <begin position="611"/>
        <end position="615"/>
    </location>
</feature>
<feature type="strand" evidence="12">
    <location>
        <begin position="622"/>
        <end position="626"/>
    </location>
</feature>
<feature type="turn" evidence="12">
    <location>
        <begin position="628"/>
        <end position="630"/>
    </location>
</feature>
<feature type="strand" evidence="13">
    <location>
        <begin position="631"/>
        <end position="633"/>
    </location>
</feature>
<feature type="strand" evidence="12">
    <location>
        <begin position="636"/>
        <end position="641"/>
    </location>
</feature>
<feature type="strand" evidence="12">
    <location>
        <begin position="646"/>
        <end position="651"/>
    </location>
</feature>
<feature type="strand" evidence="12">
    <location>
        <begin position="657"/>
        <end position="660"/>
    </location>
</feature>
<feature type="helix" evidence="13">
    <location>
        <begin position="670"/>
        <end position="676"/>
    </location>
</feature>
<feature type="strand" evidence="13">
    <location>
        <begin position="679"/>
        <end position="682"/>
    </location>
</feature>
<feature type="helix" evidence="11">
    <location>
        <begin position="694"/>
        <end position="728"/>
    </location>
</feature>
<accession>P06103</accession>
<accession>D6W356</accession>
<gene>
    <name evidence="1" type="primary">PRT1</name>
    <name type="synonym">CDC63</name>
    <name type="ordered locus">YOR361C</name>
</gene>
<proteinExistence type="evidence at protein level"/>